<sequence>MNDVSKASLPKAIFLMGPTASGKTALAIELRKVLPVELISVDSALIYRGMDIGTAKPNADELKAAPHRLLDIRDPSQAYSAADFRRDALAQMAEITAAGRIPLLVGGTMLYFKALLEGLSPLPSADPEVRSRIEQQAAELGWEALHQQLQEIDPVAAARIHPNDPQRLSRALEVFFISGKTLTELTQTSGDALPYQVHQFAIAPASRELLHQRIELRFHQMLASGFEAEVRALFARGDLHTDLPSIRCVGYRQMWSYIEGEISYDEMVYRGVCATRQLAKRQMTWLRGWEGVRWLDSENPDRARKEVLQVVGAIAD</sequence>
<dbReference type="EC" id="2.5.1.75" evidence="1 2"/>
<dbReference type="EMBL" id="AE006468">
    <property type="protein sequence ID" value="AAL23180.1"/>
    <property type="molecule type" value="Genomic_DNA"/>
</dbReference>
<dbReference type="EMBL" id="M29687">
    <property type="status" value="NOT_ANNOTATED_CDS"/>
    <property type="molecule type" value="Genomic_DNA"/>
</dbReference>
<dbReference type="RefSeq" id="NP_463221.1">
    <property type="nucleotide sequence ID" value="NC_003197.2"/>
</dbReference>
<dbReference type="RefSeq" id="WP_001000734.1">
    <property type="nucleotide sequence ID" value="NC_003197.2"/>
</dbReference>
<dbReference type="SMR" id="P37724"/>
<dbReference type="STRING" id="99287.STM4360"/>
<dbReference type="PaxDb" id="99287-STM4360"/>
<dbReference type="GeneID" id="1255886"/>
<dbReference type="KEGG" id="stm:STM4360"/>
<dbReference type="PATRIC" id="fig|99287.12.peg.4584"/>
<dbReference type="HOGENOM" id="CLU_032616_0_0_6"/>
<dbReference type="OMA" id="VPHYLID"/>
<dbReference type="PhylomeDB" id="P37724"/>
<dbReference type="BioCyc" id="SENT99287:STM4360-MONOMER"/>
<dbReference type="BRENDA" id="2.5.1.75">
    <property type="organism ID" value="2169"/>
</dbReference>
<dbReference type="Proteomes" id="UP000001014">
    <property type="component" value="Chromosome"/>
</dbReference>
<dbReference type="GO" id="GO:0005524">
    <property type="term" value="F:ATP binding"/>
    <property type="evidence" value="ECO:0007669"/>
    <property type="project" value="UniProtKB-UniRule"/>
</dbReference>
<dbReference type="GO" id="GO:0052381">
    <property type="term" value="F:tRNA dimethylallyltransferase activity"/>
    <property type="evidence" value="ECO:0000318"/>
    <property type="project" value="GO_Central"/>
</dbReference>
<dbReference type="GO" id="GO:0006400">
    <property type="term" value="P:tRNA modification"/>
    <property type="evidence" value="ECO:0000318"/>
    <property type="project" value="GO_Central"/>
</dbReference>
<dbReference type="FunFam" id="1.10.20.140:FF:000001">
    <property type="entry name" value="tRNA dimethylallyltransferase"/>
    <property type="match status" value="1"/>
</dbReference>
<dbReference type="FunFam" id="1.10.287.890:FF:000001">
    <property type="entry name" value="tRNA dimethylallyltransferase"/>
    <property type="match status" value="1"/>
</dbReference>
<dbReference type="Gene3D" id="1.10.20.140">
    <property type="match status" value="1"/>
</dbReference>
<dbReference type="Gene3D" id="1.10.287.890">
    <property type="entry name" value="Crystal structure of tRNA isopentenylpyrophosphate transferase (bh2366) domain"/>
    <property type="match status" value="1"/>
</dbReference>
<dbReference type="Gene3D" id="3.40.50.300">
    <property type="entry name" value="P-loop containing nucleotide triphosphate hydrolases"/>
    <property type="match status" value="1"/>
</dbReference>
<dbReference type="HAMAP" id="MF_00185">
    <property type="entry name" value="IPP_trans"/>
    <property type="match status" value="1"/>
</dbReference>
<dbReference type="InterPro" id="IPR039657">
    <property type="entry name" value="Dimethylallyltransferase"/>
</dbReference>
<dbReference type="InterPro" id="IPR018022">
    <property type="entry name" value="IPT"/>
</dbReference>
<dbReference type="InterPro" id="IPR027417">
    <property type="entry name" value="P-loop_NTPase"/>
</dbReference>
<dbReference type="NCBIfam" id="TIGR00174">
    <property type="entry name" value="miaA"/>
    <property type="match status" value="1"/>
</dbReference>
<dbReference type="PANTHER" id="PTHR11088">
    <property type="entry name" value="TRNA DIMETHYLALLYLTRANSFERASE"/>
    <property type="match status" value="1"/>
</dbReference>
<dbReference type="PANTHER" id="PTHR11088:SF60">
    <property type="entry name" value="TRNA DIMETHYLALLYLTRANSFERASE"/>
    <property type="match status" value="1"/>
</dbReference>
<dbReference type="Pfam" id="PF01715">
    <property type="entry name" value="IPPT"/>
    <property type="match status" value="1"/>
</dbReference>
<dbReference type="SUPFAM" id="SSF52540">
    <property type="entry name" value="P-loop containing nucleoside triphosphate hydrolases"/>
    <property type="match status" value="1"/>
</dbReference>
<protein>
    <recommendedName>
        <fullName evidence="1">tRNA dimethylallyltransferase</fullName>
        <ecNumber evidence="1 2">2.5.1.75</ecNumber>
    </recommendedName>
    <alternativeName>
        <fullName evidence="1">Dimethylallyl diphosphate:tRNA dimethylallyltransferase</fullName>
        <shortName evidence="1">DMAPP:tRNA dimethylallyltransferase</shortName>
        <shortName evidence="1">DMATase</shortName>
    </alternativeName>
    <alternativeName>
        <fullName evidence="1">Isopentenyl-diphosphate:tRNA isopentenyltransferase</fullName>
        <shortName evidence="1">IPP transferase</shortName>
        <shortName evidence="1">IPPT</shortName>
        <shortName evidence="1">IPTase</shortName>
    </alternativeName>
</protein>
<accession>P37724</accession>
<keyword id="KW-0067">ATP-binding</keyword>
<keyword id="KW-0460">Magnesium</keyword>
<keyword id="KW-0547">Nucleotide-binding</keyword>
<keyword id="KW-1185">Reference proteome</keyword>
<keyword id="KW-0808">Transferase</keyword>
<keyword id="KW-0819">tRNA processing</keyword>
<gene>
    <name evidence="1 3" type="primary">miaA</name>
    <name type="ordered locus">STM4360</name>
</gene>
<feature type="chain" id="PRO_0000163969" description="tRNA dimethylallyltransferase">
    <location>
        <begin position="1"/>
        <end position="316"/>
    </location>
</feature>
<feature type="region of interest" description="Interaction with substrate tRNA" evidence="1">
    <location>
        <begin position="42"/>
        <end position="45"/>
    </location>
</feature>
<feature type="region of interest" description="Interaction with substrate tRNA" evidence="1">
    <location>
        <begin position="166"/>
        <end position="170"/>
    </location>
</feature>
<feature type="region of interest" description="Interaction with substrate tRNA" evidence="1">
    <location>
        <begin position="247"/>
        <end position="252"/>
    </location>
</feature>
<feature type="binding site" evidence="1">
    <location>
        <begin position="17"/>
        <end position="24"/>
    </location>
    <ligand>
        <name>ATP</name>
        <dbReference type="ChEBI" id="CHEBI:30616"/>
    </ligand>
</feature>
<feature type="binding site" evidence="1">
    <location>
        <begin position="19"/>
        <end position="24"/>
    </location>
    <ligand>
        <name>substrate</name>
    </ligand>
</feature>
<feature type="site" description="Interaction with substrate tRNA" evidence="1">
    <location>
        <position position="108"/>
    </location>
</feature>
<feature type="site" description="Interaction with substrate tRNA" evidence="1">
    <location>
        <position position="130"/>
    </location>
</feature>
<evidence type="ECO:0000255" key="1">
    <source>
        <dbReference type="HAMAP-Rule" id="MF_00185"/>
    </source>
</evidence>
<evidence type="ECO:0000269" key="2">
    <source>
    </source>
</evidence>
<evidence type="ECO:0000303" key="3">
    <source>
    </source>
</evidence>
<name>MIAA_SALTY</name>
<reference key="1">
    <citation type="journal article" date="2001" name="Nature">
        <title>Complete genome sequence of Salmonella enterica serovar Typhimurium LT2.</title>
        <authorList>
            <person name="McClelland M."/>
            <person name="Sanderson K.E."/>
            <person name="Spieth J."/>
            <person name="Clifton S.W."/>
            <person name="Latreille P."/>
            <person name="Courtney L."/>
            <person name="Porwollik S."/>
            <person name="Ali J."/>
            <person name="Dante M."/>
            <person name="Du F."/>
            <person name="Hou S."/>
            <person name="Layman D."/>
            <person name="Leonard S."/>
            <person name="Nguyen C."/>
            <person name="Scott K."/>
            <person name="Holmes A."/>
            <person name="Grewal N."/>
            <person name="Mulvaney E."/>
            <person name="Ryan E."/>
            <person name="Sun H."/>
            <person name="Florea L."/>
            <person name="Miller W."/>
            <person name="Stoneking T."/>
            <person name="Nhan M."/>
            <person name="Waterston R."/>
            <person name="Wilson R.K."/>
        </authorList>
    </citation>
    <scope>NUCLEOTIDE SEQUENCE [LARGE SCALE GENOMIC DNA]</scope>
    <source>
        <strain>LT2 / SGSC1412 / ATCC 700720</strain>
    </source>
</reference>
<reference key="2">
    <citation type="journal article" date="1989" name="J. Bacteriol.">
        <title>Nucleotide sequence of the Salmonella typhimurium mutL gene required for mismatch repair: homology of MutL to HexB of Streptococcus pneumoniae and to PMS1 of the yeast Saccharomyces cerevisiae.</title>
        <authorList>
            <person name="Mankovich J.A."/>
            <person name="McIntyre C.A."/>
            <person name="Walker G.C."/>
        </authorList>
    </citation>
    <scope>NUCLEOTIDE SEQUENCE [GENOMIC DNA] OF 1-95</scope>
</reference>
<reference key="3">
    <citation type="journal article" date="1994" name="Nat. Genet.">
        <title>Large scale bacterial gene discovery by similarity search.</title>
        <authorList>
            <person name="Robison K."/>
            <person name="Gilbert W."/>
            <person name="Church G.M."/>
        </authorList>
    </citation>
    <scope>IDENTIFICATION</scope>
</reference>
<reference key="4">
    <citation type="journal article" date="2015" name="Biochemistry">
        <title>Steady-state kinetics and spectroscopic characterization of enzyme-tRNA interactions for the non-heme diiron tRNA-monooxygenase, MiaE.</title>
        <authorList>
            <person name="Subedi B.P."/>
            <person name="Corder A.L."/>
            <person name="Zhang S."/>
            <person name="Foss F.W. Jr."/>
            <person name="Pierce B.S."/>
        </authorList>
    </citation>
    <scope>FUNCTION</scope>
    <scope>CATALYTIC ACTIVITY</scope>
    <source>
        <strain>LT2 / SGSC1412 / ATCC 700720</strain>
    </source>
</reference>
<organism>
    <name type="scientific">Salmonella typhimurium (strain LT2 / SGSC1412 / ATCC 700720)</name>
    <dbReference type="NCBI Taxonomy" id="99287"/>
    <lineage>
        <taxon>Bacteria</taxon>
        <taxon>Pseudomonadati</taxon>
        <taxon>Pseudomonadota</taxon>
        <taxon>Gammaproteobacteria</taxon>
        <taxon>Enterobacterales</taxon>
        <taxon>Enterobacteriaceae</taxon>
        <taxon>Salmonella</taxon>
    </lineage>
</organism>
<proteinExistence type="evidence at protein level"/>
<comment type="function">
    <text evidence="1 2">Catalyzes the transfer of a dimethylallyl group onto the adenine at position 37 in tRNAs that read codons beginning with uridine, leading to the formation of N6-(dimethylallyl)adenosine (i(6)A).</text>
</comment>
<comment type="catalytic activity">
    <reaction evidence="1 2">
        <text>adenosine(37) in tRNA + dimethylallyl diphosphate = N(6)-dimethylallyladenosine(37) in tRNA + diphosphate</text>
        <dbReference type="Rhea" id="RHEA:26482"/>
        <dbReference type="Rhea" id="RHEA-COMP:10162"/>
        <dbReference type="Rhea" id="RHEA-COMP:10375"/>
        <dbReference type="ChEBI" id="CHEBI:33019"/>
        <dbReference type="ChEBI" id="CHEBI:57623"/>
        <dbReference type="ChEBI" id="CHEBI:74411"/>
        <dbReference type="ChEBI" id="CHEBI:74415"/>
        <dbReference type="EC" id="2.5.1.75"/>
    </reaction>
</comment>
<comment type="cofactor">
    <cofactor evidence="1">
        <name>Mg(2+)</name>
        <dbReference type="ChEBI" id="CHEBI:18420"/>
    </cofactor>
</comment>
<comment type="subunit">
    <text evidence="1">Monomer.</text>
</comment>
<comment type="similarity">
    <text evidence="1">Belongs to the IPP transferase family.</text>
</comment>